<organism>
    <name type="scientific">Erwinia tasmaniensis (strain DSM 17950 / CFBP 7177 / CIP 109463 / NCPPB 4357 / Et1/99)</name>
    <dbReference type="NCBI Taxonomy" id="465817"/>
    <lineage>
        <taxon>Bacteria</taxon>
        <taxon>Pseudomonadati</taxon>
        <taxon>Pseudomonadota</taxon>
        <taxon>Gammaproteobacteria</taxon>
        <taxon>Enterobacterales</taxon>
        <taxon>Erwiniaceae</taxon>
        <taxon>Erwinia</taxon>
    </lineage>
</organism>
<keyword id="KW-1185">Reference proteome</keyword>
<comment type="similarity">
    <text evidence="1">Belongs to the SlyX family.</text>
</comment>
<protein>
    <recommendedName>
        <fullName evidence="1">Protein SlyX</fullName>
    </recommendedName>
</protein>
<evidence type="ECO:0000255" key="1">
    <source>
        <dbReference type="HAMAP-Rule" id="MF_00715"/>
    </source>
</evidence>
<name>SLYX_ERWT9</name>
<feature type="chain" id="PRO_1000195831" description="Protein SlyX">
    <location>
        <begin position="1"/>
        <end position="72"/>
    </location>
</feature>
<accession>B2VK44</accession>
<sequence>MQYTQWEHRLDMLESKLAFQEHTIEELNLTVVQHELEMARLREQMRLLTDKLKAAAPSMIASQSEETPPPHY</sequence>
<gene>
    <name evidence="1" type="primary">slyX</name>
    <name type="ordered locus">ETA_31750</name>
</gene>
<reference key="1">
    <citation type="journal article" date="2008" name="Environ. Microbiol.">
        <title>The genome of Erwinia tasmaniensis strain Et1/99, a non-pathogenic bacterium in the genus Erwinia.</title>
        <authorList>
            <person name="Kube M."/>
            <person name="Migdoll A.M."/>
            <person name="Mueller I."/>
            <person name="Kuhl H."/>
            <person name="Beck A."/>
            <person name="Reinhardt R."/>
            <person name="Geider K."/>
        </authorList>
    </citation>
    <scope>NUCLEOTIDE SEQUENCE [LARGE SCALE GENOMIC DNA]</scope>
    <source>
        <strain>DSM 17950 / CFBP 7177 / CIP 109463 / NCPPB 4357 / Et1/99</strain>
    </source>
</reference>
<proteinExistence type="inferred from homology"/>
<dbReference type="EMBL" id="CU468135">
    <property type="protein sequence ID" value="CAO98221.1"/>
    <property type="molecule type" value="Genomic_DNA"/>
</dbReference>
<dbReference type="RefSeq" id="WP_012442853.1">
    <property type="nucleotide sequence ID" value="NC_010694.1"/>
</dbReference>
<dbReference type="SMR" id="B2VK44"/>
<dbReference type="STRING" id="465817.ETA_31750"/>
<dbReference type="KEGG" id="eta:ETA_31750"/>
<dbReference type="eggNOG" id="COG2900">
    <property type="taxonomic scope" value="Bacteria"/>
</dbReference>
<dbReference type="HOGENOM" id="CLU_180796_4_2_6"/>
<dbReference type="OrthoDB" id="5771733at2"/>
<dbReference type="Proteomes" id="UP000001726">
    <property type="component" value="Chromosome"/>
</dbReference>
<dbReference type="Gene3D" id="1.20.5.300">
    <property type="match status" value="1"/>
</dbReference>
<dbReference type="HAMAP" id="MF_00715">
    <property type="entry name" value="SlyX"/>
    <property type="match status" value="1"/>
</dbReference>
<dbReference type="InterPro" id="IPR007236">
    <property type="entry name" value="SlyX"/>
</dbReference>
<dbReference type="NCBIfam" id="NF002750">
    <property type="entry name" value="PRK02793.1"/>
    <property type="match status" value="1"/>
</dbReference>
<dbReference type="PANTHER" id="PTHR36508">
    <property type="entry name" value="PROTEIN SLYX"/>
    <property type="match status" value="1"/>
</dbReference>
<dbReference type="PANTHER" id="PTHR36508:SF1">
    <property type="entry name" value="PROTEIN SLYX"/>
    <property type="match status" value="1"/>
</dbReference>
<dbReference type="Pfam" id="PF04102">
    <property type="entry name" value="SlyX"/>
    <property type="match status" value="1"/>
</dbReference>